<sequence>DPCYEVCLQQHGNVKECEEACKHPVEY</sequence>
<protein>
    <recommendedName>
        <fullName evidence="3">Potassium channel toxin kappa-KTx 2.2</fullName>
    </recommendedName>
    <alternativeName>
        <fullName evidence="2">Toxin OmTx2</fullName>
    </alternativeName>
    <component>
        <recommendedName>
            <fullName evidence="3">Potassium channel toxin kappa-KTx 2.1</fullName>
        </recommendedName>
        <alternativeName>
            <fullName evidence="2">Toxin OmTx1</fullName>
        </alternativeName>
    </component>
    <component>
        <recommendedName>
            <fullName evidence="3">Potassium channel toxin kappa-KTx 2.4</fullName>
        </recommendedName>
        <alternativeName>
            <fullName evidence="2">Toxin OmTx4</fullName>
        </alternativeName>
    </component>
</protein>
<keyword id="KW-0002">3D-structure</keyword>
<keyword id="KW-0903">Direct protein sequencing</keyword>
<keyword id="KW-1015">Disulfide bond</keyword>
<keyword id="KW-0872">Ion channel impairing toxin</keyword>
<keyword id="KW-0528">Neurotoxin</keyword>
<keyword id="KW-0632">Potassium channel impairing toxin</keyword>
<keyword id="KW-0964">Secreted</keyword>
<keyword id="KW-0800">Toxin</keyword>
<keyword id="KW-1220">Voltage-gated potassium channel impairing toxin</keyword>
<reference key="1">
    <citation type="journal article" date="2005" name="Biochem. J.">
        <title>An unusual fold for potassium channel blockers: NMR structure of three toxins from the scorpion Opisthacanthus madagascariensis.</title>
        <authorList>
            <person name="Chagot B."/>
            <person name="Pimentel C."/>
            <person name="Dai L."/>
            <person name="Pil J."/>
            <person name="Tytgat J."/>
            <person name="Nakajima T."/>
            <person name="Corzo G."/>
            <person name="Darbon H."/>
            <person name="Ferrat G."/>
        </authorList>
    </citation>
    <scope>PROTEIN SEQUENCE</scope>
    <scope>FUNCTION (OMTX1 AND OMTX2)</scope>
    <scope>SYNTHESIS (OMTX1; OMTX2 AND OMTX4)</scope>
    <scope>IDENTIFICATION BY MASS SPECTROMETRY</scope>
    <scope>STRUCTURE BY NMR (OMTX1 AND OMTX2)</scope>
    <scope>DISULFIDE BONDS</scope>
    <scope>SUBCELLULAR LOCATION</scope>
    <source>
        <tissue>Venom</tissue>
    </source>
</reference>
<reference key="2">
    <citation type="journal article" date="2012" name="Biochem. Pharmacol.">
        <title>Purification, molecular cloning and functional characterization of HelaTx1 (Heterometrus laoticus): the first member of a new kappa-KTX subfamily.</title>
        <authorList>
            <person name="Vandendriessche T."/>
            <person name="Kopljar I."/>
            <person name="Jenkins D.P."/>
            <person name="Diego-Garcia E."/>
            <person name="Abdel-Mottaleb Y."/>
            <person name="Vermassen E."/>
            <person name="Clynen E."/>
            <person name="Schoofs L."/>
            <person name="Wulff H."/>
            <person name="Snyders D."/>
            <person name="Tytgat J."/>
        </authorList>
    </citation>
    <scope>NOMENCLATURE</scope>
</reference>
<comment type="function">
    <text evidence="1">OmTx1 decreases the amplitude of the potassium current of the rat channels Kv1.1/KCNA1 by 17% and Kv1.2/KCNA2 by 12% as well as human Kv1.3/KCNA3 by 24%.</text>
</comment>
<comment type="function">
    <text evidence="1">OmTx2 decreases the amplitude of the potassium current of the rat channels Kv1.1/KCNA1 by 8% and Kv1.2/KCNA2 by 10% as well as human Kv1.3/KCNA3 by 36%. Also alters glucose-induced insulin release from pancreatic islets.</text>
</comment>
<comment type="subcellular location">
    <subcellularLocation>
        <location evidence="1">Secreted</location>
    </subcellularLocation>
</comment>
<comment type="tissue specificity">
    <text evidence="5">Expressed by the venom gland.</text>
</comment>
<comment type="domain">
    <text evidence="1">Has the structural arrangement of two alpha-helices stabilized by disulfide bonds (CSalpha/alpha 2(S-S)).</text>
</comment>
<comment type="similarity">
    <text evidence="4">Belongs to the short scorpion toxin superfamily. Potassium channel inhibitor kappa-KTx family. Kappa-KTx 2 subfamily.</text>
</comment>
<name>KKX21_OPIMA</name>
<dbReference type="PDB" id="1WQC">
    <property type="method" value="NMR"/>
    <property type="chains" value="A=1-26"/>
</dbReference>
<dbReference type="PDB" id="1WQD">
    <property type="method" value="NMR"/>
    <property type="chains" value="A=1-27"/>
</dbReference>
<dbReference type="PDBsum" id="1WQC"/>
<dbReference type="PDBsum" id="1WQD"/>
<dbReference type="SMR" id="P0C1Z3"/>
<dbReference type="EvolutionaryTrace" id="P0C1Z3"/>
<dbReference type="GO" id="GO:0005576">
    <property type="term" value="C:extracellular region"/>
    <property type="evidence" value="ECO:0007669"/>
    <property type="project" value="UniProtKB-SubCell"/>
</dbReference>
<dbReference type="GO" id="GO:0015459">
    <property type="term" value="F:potassium channel regulator activity"/>
    <property type="evidence" value="ECO:0007669"/>
    <property type="project" value="UniProtKB-KW"/>
</dbReference>
<dbReference type="GO" id="GO:0090729">
    <property type="term" value="F:toxin activity"/>
    <property type="evidence" value="ECO:0007669"/>
    <property type="project" value="UniProtKB-KW"/>
</dbReference>
<feature type="peptide" id="PRO_0000254058" description="Potassium channel toxin kappa-KTx 2.2" evidence="2">
    <location>
        <begin position="1"/>
        <end position="27"/>
    </location>
</feature>
<feature type="peptide" id="PRO_0000254059" description="Potassium channel toxin kappa-KTx 2.1" evidence="2">
    <location>
        <begin position="1"/>
        <end position="26"/>
    </location>
</feature>
<feature type="peptide" id="PRO_0000254060" description="Potassium channel toxin kappa-KTx 2.4" evidence="2">
    <location>
        <begin position="1"/>
        <end position="24"/>
    </location>
</feature>
<feature type="disulfide bond" evidence="1">
    <location>
        <begin position="3"/>
        <end position="21"/>
    </location>
</feature>
<feature type="disulfide bond" evidence="1">
    <location>
        <begin position="7"/>
        <end position="17"/>
    </location>
</feature>
<feature type="helix" evidence="6">
    <location>
        <begin position="2"/>
        <end position="10"/>
    </location>
</feature>
<feature type="helix" evidence="6">
    <location>
        <begin position="15"/>
        <end position="22"/>
    </location>
</feature>
<proteinExistence type="evidence at protein level"/>
<organism>
    <name type="scientific">Opisthacanthus madagascariensis</name>
    <name type="common">Scorpion</name>
    <dbReference type="NCBI Taxonomy" id="167108"/>
    <lineage>
        <taxon>Eukaryota</taxon>
        <taxon>Metazoa</taxon>
        <taxon>Ecdysozoa</taxon>
        <taxon>Arthropoda</taxon>
        <taxon>Chelicerata</taxon>
        <taxon>Arachnida</taxon>
        <taxon>Scorpiones</taxon>
        <taxon>Iurida</taxon>
        <taxon>Scorpionoidea</taxon>
        <taxon>Hemiscorpiidae</taxon>
        <taxon>Opisthacanthus</taxon>
    </lineage>
</organism>
<evidence type="ECO:0000269" key="1">
    <source>
    </source>
</evidence>
<evidence type="ECO:0000303" key="2">
    <source>
    </source>
</evidence>
<evidence type="ECO:0000303" key="3">
    <source>
    </source>
</evidence>
<evidence type="ECO:0000305" key="4"/>
<evidence type="ECO:0000305" key="5">
    <source>
    </source>
</evidence>
<evidence type="ECO:0007829" key="6">
    <source>
        <dbReference type="PDB" id="1WQC"/>
    </source>
</evidence>
<accession>P0C1Z3</accession>